<name>DEN10_MOUSE</name>
<reference key="1">
    <citation type="journal article" date="2005" name="Science">
        <title>The transcriptional landscape of the mammalian genome.</title>
        <authorList>
            <person name="Carninci P."/>
            <person name="Kasukawa T."/>
            <person name="Katayama S."/>
            <person name="Gough J."/>
            <person name="Frith M.C."/>
            <person name="Maeda N."/>
            <person name="Oyama R."/>
            <person name="Ravasi T."/>
            <person name="Lenhard B."/>
            <person name="Wells C."/>
            <person name="Kodzius R."/>
            <person name="Shimokawa K."/>
            <person name="Bajic V.B."/>
            <person name="Brenner S.E."/>
            <person name="Batalov S."/>
            <person name="Forrest A.R."/>
            <person name="Zavolan M."/>
            <person name="Davis M.J."/>
            <person name="Wilming L.G."/>
            <person name="Aidinis V."/>
            <person name="Allen J.E."/>
            <person name="Ambesi-Impiombato A."/>
            <person name="Apweiler R."/>
            <person name="Aturaliya R.N."/>
            <person name="Bailey T.L."/>
            <person name="Bansal M."/>
            <person name="Baxter L."/>
            <person name="Beisel K.W."/>
            <person name="Bersano T."/>
            <person name="Bono H."/>
            <person name="Chalk A.M."/>
            <person name="Chiu K.P."/>
            <person name="Choudhary V."/>
            <person name="Christoffels A."/>
            <person name="Clutterbuck D.R."/>
            <person name="Crowe M.L."/>
            <person name="Dalla E."/>
            <person name="Dalrymple B.P."/>
            <person name="de Bono B."/>
            <person name="Della Gatta G."/>
            <person name="di Bernardo D."/>
            <person name="Down T."/>
            <person name="Engstrom P."/>
            <person name="Fagiolini M."/>
            <person name="Faulkner G."/>
            <person name="Fletcher C.F."/>
            <person name="Fukushima T."/>
            <person name="Furuno M."/>
            <person name="Futaki S."/>
            <person name="Gariboldi M."/>
            <person name="Georgii-Hemming P."/>
            <person name="Gingeras T.R."/>
            <person name="Gojobori T."/>
            <person name="Green R.E."/>
            <person name="Gustincich S."/>
            <person name="Harbers M."/>
            <person name="Hayashi Y."/>
            <person name="Hensch T.K."/>
            <person name="Hirokawa N."/>
            <person name="Hill D."/>
            <person name="Huminiecki L."/>
            <person name="Iacono M."/>
            <person name="Ikeo K."/>
            <person name="Iwama A."/>
            <person name="Ishikawa T."/>
            <person name="Jakt M."/>
            <person name="Kanapin A."/>
            <person name="Katoh M."/>
            <person name="Kawasawa Y."/>
            <person name="Kelso J."/>
            <person name="Kitamura H."/>
            <person name="Kitano H."/>
            <person name="Kollias G."/>
            <person name="Krishnan S.P."/>
            <person name="Kruger A."/>
            <person name="Kummerfeld S.K."/>
            <person name="Kurochkin I.V."/>
            <person name="Lareau L.F."/>
            <person name="Lazarevic D."/>
            <person name="Lipovich L."/>
            <person name="Liu J."/>
            <person name="Liuni S."/>
            <person name="McWilliam S."/>
            <person name="Madan Babu M."/>
            <person name="Madera M."/>
            <person name="Marchionni L."/>
            <person name="Matsuda H."/>
            <person name="Matsuzawa S."/>
            <person name="Miki H."/>
            <person name="Mignone F."/>
            <person name="Miyake S."/>
            <person name="Morris K."/>
            <person name="Mottagui-Tabar S."/>
            <person name="Mulder N."/>
            <person name="Nakano N."/>
            <person name="Nakauchi H."/>
            <person name="Ng P."/>
            <person name="Nilsson R."/>
            <person name="Nishiguchi S."/>
            <person name="Nishikawa S."/>
            <person name="Nori F."/>
            <person name="Ohara O."/>
            <person name="Okazaki Y."/>
            <person name="Orlando V."/>
            <person name="Pang K.C."/>
            <person name="Pavan W.J."/>
            <person name="Pavesi G."/>
            <person name="Pesole G."/>
            <person name="Petrovsky N."/>
            <person name="Piazza S."/>
            <person name="Reed J."/>
            <person name="Reid J.F."/>
            <person name="Ring B.Z."/>
            <person name="Ringwald M."/>
            <person name="Rost B."/>
            <person name="Ruan Y."/>
            <person name="Salzberg S.L."/>
            <person name="Sandelin A."/>
            <person name="Schneider C."/>
            <person name="Schoenbach C."/>
            <person name="Sekiguchi K."/>
            <person name="Semple C.A."/>
            <person name="Seno S."/>
            <person name="Sessa L."/>
            <person name="Sheng Y."/>
            <person name="Shibata Y."/>
            <person name="Shimada H."/>
            <person name="Shimada K."/>
            <person name="Silva D."/>
            <person name="Sinclair B."/>
            <person name="Sperling S."/>
            <person name="Stupka E."/>
            <person name="Sugiura K."/>
            <person name="Sultana R."/>
            <person name="Takenaka Y."/>
            <person name="Taki K."/>
            <person name="Tammoja K."/>
            <person name="Tan S.L."/>
            <person name="Tang S."/>
            <person name="Taylor M.S."/>
            <person name="Tegner J."/>
            <person name="Teichmann S.A."/>
            <person name="Ueda H.R."/>
            <person name="van Nimwegen E."/>
            <person name="Verardo R."/>
            <person name="Wei C.L."/>
            <person name="Yagi K."/>
            <person name="Yamanishi H."/>
            <person name="Zabarovsky E."/>
            <person name="Zhu S."/>
            <person name="Zimmer A."/>
            <person name="Hide W."/>
            <person name="Bult C."/>
            <person name="Grimmond S.M."/>
            <person name="Teasdale R.D."/>
            <person name="Liu E.T."/>
            <person name="Brusic V."/>
            <person name="Quackenbush J."/>
            <person name="Wahlestedt C."/>
            <person name="Mattick J.S."/>
            <person name="Hume D.A."/>
            <person name="Kai C."/>
            <person name="Sasaki D."/>
            <person name="Tomaru Y."/>
            <person name="Fukuda S."/>
            <person name="Kanamori-Katayama M."/>
            <person name="Suzuki M."/>
            <person name="Aoki J."/>
            <person name="Arakawa T."/>
            <person name="Iida J."/>
            <person name="Imamura K."/>
            <person name="Itoh M."/>
            <person name="Kato T."/>
            <person name="Kawaji H."/>
            <person name="Kawagashira N."/>
            <person name="Kawashima T."/>
            <person name="Kojima M."/>
            <person name="Kondo S."/>
            <person name="Konno H."/>
            <person name="Nakano K."/>
            <person name="Ninomiya N."/>
            <person name="Nishio T."/>
            <person name="Okada M."/>
            <person name="Plessy C."/>
            <person name="Shibata K."/>
            <person name="Shiraki T."/>
            <person name="Suzuki S."/>
            <person name="Tagami M."/>
            <person name="Waki K."/>
            <person name="Watahiki A."/>
            <person name="Okamura-Oho Y."/>
            <person name="Suzuki H."/>
            <person name="Kawai J."/>
            <person name="Hayashizaki Y."/>
        </authorList>
    </citation>
    <scope>NUCLEOTIDE SEQUENCE [LARGE SCALE MRNA]</scope>
    <source>
        <strain>C57BL/6J</strain>
        <tissue>Pancreas</tissue>
    </source>
</reference>
<reference key="2">
    <citation type="journal article" date="2004" name="Genome Res.">
        <title>The status, quality, and expansion of the NIH full-length cDNA project: the Mammalian Gene Collection (MGC).</title>
        <authorList>
            <consortium name="The MGC Project Team"/>
        </authorList>
    </citation>
    <scope>NUCLEOTIDE SEQUENCE [LARGE SCALE MRNA]</scope>
    <source>
        <strain>FVB/N</strain>
        <tissue>Kidney</tissue>
    </source>
</reference>
<reference key="3">
    <citation type="journal article" date="2010" name="Cell">
        <title>A tissue-specific atlas of mouse protein phosphorylation and expression.</title>
        <authorList>
            <person name="Huttlin E.L."/>
            <person name="Jedrychowski M.P."/>
            <person name="Elias J.E."/>
            <person name="Goswami T."/>
            <person name="Rad R."/>
            <person name="Beausoleil S.A."/>
            <person name="Villen J."/>
            <person name="Haas W."/>
            <person name="Sowa M.E."/>
            <person name="Gygi S.P."/>
        </authorList>
    </citation>
    <scope>IDENTIFICATION BY MASS SPECTROMETRY [LARGE SCALE ANALYSIS]</scope>
    <source>
        <tissue>Brain</tissue>
        <tissue>Heart</tissue>
        <tissue>Kidney</tissue>
        <tissue>Liver</tissue>
        <tissue>Lung</tissue>
        <tissue>Spleen</tissue>
        <tissue>Testis</tissue>
    </source>
</reference>
<sequence length="357" mass="40421">MAAVVAMDTQLMLGVGLIEKDSNGEALWVWCYPSTTASLRNLLLRKCCLTDENKLLHPFVFGQYRRTWFYVTTVEVPDSSVLKKVTHFSIVLTAKDFNPEKYAAFTRILCRIYLKYGSPVKMMESYIAVLTKGICQSEENGSFLSRDFDGRKAYLAGSIKDIVSQFGMETVILHTALMLKKRIVVYHPKIEAVQEFTRTLPALVWHRQDWTILHSYMHLHAEELEGLQMCTGYIAGFVELEVSNRPDLYDVFVNLADSEITIAPLAKEAMTMGKLHKEIGQLIVQSAEDPEKSDSQVIQDIALKTKEIFTHLAPFSEVSDDGGKVILNVEALKQQRFPPATENFLYHLAAAEQMLKV</sequence>
<gene>
    <name evidence="4" type="primary">Dennd10</name>
    <name evidence="4" type="synonym">Fam45a</name>
</gene>
<organism>
    <name type="scientific">Mus musculus</name>
    <name type="common">Mouse</name>
    <dbReference type="NCBI Taxonomy" id="10090"/>
    <lineage>
        <taxon>Eukaryota</taxon>
        <taxon>Metazoa</taxon>
        <taxon>Chordata</taxon>
        <taxon>Craniata</taxon>
        <taxon>Vertebrata</taxon>
        <taxon>Euteleostomi</taxon>
        <taxon>Mammalia</taxon>
        <taxon>Eutheria</taxon>
        <taxon>Euarchontoglires</taxon>
        <taxon>Glires</taxon>
        <taxon>Rodentia</taxon>
        <taxon>Myomorpha</taxon>
        <taxon>Muroidea</taxon>
        <taxon>Muridae</taxon>
        <taxon>Murinae</taxon>
        <taxon>Mus</taxon>
        <taxon>Mus</taxon>
    </lineage>
</organism>
<comment type="function">
    <text evidence="1">Guanine nucleotide exchange factor (GEF) regulating homeostasis of late endocytic pathway, including endosomal positioning, maturation and secretion, possibly through activating Rab proteins such as RAB27A and RAB27B (By similarity). Promotes the exchange of GDP to GTP, converting inactive GDP-bound RAB27A and RAB27B into their active GTP-bound form (By similarity).</text>
</comment>
<comment type="subunit">
    <text evidence="1">Interacts with the coiled-coil heterodimer of CCDC22 and CCDC93; the interaction is direct (By similarity). Interacts with RAB27A and RAB27B (GDP-bound forms preferentially) (By similarity).</text>
</comment>
<comment type="subcellular location">
    <subcellularLocation>
        <location evidence="1">Late endosome</location>
    </subcellularLocation>
</comment>
<comment type="similarity">
    <text evidence="3">Belongs to the DENND10 family.</text>
</comment>
<dbReference type="EMBL" id="AK007867">
    <property type="protein sequence ID" value="BAB25318.1"/>
    <property type="molecule type" value="mRNA"/>
</dbReference>
<dbReference type="EMBL" id="AK145769">
    <property type="protein sequence ID" value="BAE26640.1"/>
    <property type="molecule type" value="mRNA"/>
</dbReference>
<dbReference type="EMBL" id="BC013514">
    <property type="protein sequence ID" value="AAH13514.1"/>
    <property type="molecule type" value="mRNA"/>
</dbReference>
<dbReference type="CCDS" id="CCDS29942.1"/>
<dbReference type="RefSeq" id="NP_001161301.1">
    <property type="nucleotide sequence ID" value="NM_001167829.1"/>
</dbReference>
<dbReference type="RefSeq" id="NP_080713.2">
    <property type="nucleotide sequence ID" value="NM_026437.5"/>
</dbReference>
<dbReference type="SMR" id="Q9D8N2"/>
<dbReference type="FunCoup" id="Q9D8N2">
    <property type="interactions" value="1316"/>
</dbReference>
<dbReference type="STRING" id="10090.ENSMUSP00000025957"/>
<dbReference type="iPTMnet" id="Q9D8N2"/>
<dbReference type="PhosphoSitePlus" id="Q9D8N2"/>
<dbReference type="SwissPalm" id="Q9D8N2"/>
<dbReference type="PaxDb" id="10090-ENSMUSP00000025957"/>
<dbReference type="PeptideAtlas" id="Q9D8N2"/>
<dbReference type="ProteomicsDB" id="275837"/>
<dbReference type="Pumba" id="Q9D8N2"/>
<dbReference type="Antibodypedia" id="49417">
    <property type="antibodies" value="46 antibodies from 14 providers"/>
</dbReference>
<dbReference type="DNASU" id="67894"/>
<dbReference type="Ensembl" id="ENSMUST00000025957.9">
    <property type="protein sequence ID" value="ENSMUSP00000025957.9"/>
    <property type="gene ID" value="ENSMUSG00000024993.16"/>
</dbReference>
<dbReference type="GeneID" id="67894"/>
<dbReference type="KEGG" id="mmu:67894"/>
<dbReference type="UCSC" id="uc008ica.2">
    <property type="organism name" value="mouse"/>
</dbReference>
<dbReference type="AGR" id="MGI:1915144"/>
<dbReference type="CTD" id="404636"/>
<dbReference type="MGI" id="MGI:1915144">
    <property type="gene designation" value="Dennd10"/>
</dbReference>
<dbReference type="VEuPathDB" id="HostDB:ENSMUSG00000024993"/>
<dbReference type="eggNOG" id="ENOG502QVHR">
    <property type="taxonomic scope" value="Eukaryota"/>
</dbReference>
<dbReference type="GeneTree" id="ENSGT00390000014431"/>
<dbReference type="HOGENOM" id="CLU_050301_0_0_1"/>
<dbReference type="InParanoid" id="Q9D8N2"/>
<dbReference type="OMA" id="HKDIAMF"/>
<dbReference type="OrthoDB" id="66409at2759"/>
<dbReference type="PhylomeDB" id="Q9D8N2"/>
<dbReference type="TreeFam" id="TF332501"/>
<dbReference type="BioGRID-ORCS" id="67894">
    <property type="hits" value="1 hit in 77 CRISPR screens"/>
</dbReference>
<dbReference type="ChiTaRS" id="Fam45a">
    <property type="organism name" value="mouse"/>
</dbReference>
<dbReference type="PRO" id="PR:Q9D8N2"/>
<dbReference type="Proteomes" id="UP000000589">
    <property type="component" value="Chromosome 19"/>
</dbReference>
<dbReference type="RNAct" id="Q9D8N2">
    <property type="molecule type" value="protein"/>
</dbReference>
<dbReference type="Bgee" id="ENSMUSG00000024993">
    <property type="expression patterns" value="Expressed in spermatocyte and 250 other cell types or tissues"/>
</dbReference>
<dbReference type="ExpressionAtlas" id="Q9D8N2">
    <property type="expression patterns" value="baseline and differential"/>
</dbReference>
<dbReference type="GO" id="GO:0005770">
    <property type="term" value="C:late endosome"/>
    <property type="evidence" value="ECO:0000250"/>
    <property type="project" value="UniProtKB"/>
</dbReference>
<dbReference type="GO" id="GO:0005085">
    <property type="term" value="F:guanyl-nucleotide exchange factor activity"/>
    <property type="evidence" value="ECO:0000250"/>
    <property type="project" value="UniProtKB"/>
</dbReference>
<dbReference type="GO" id="GO:0031267">
    <property type="term" value="F:small GTPase binding"/>
    <property type="evidence" value="ECO:0007669"/>
    <property type="project" value="Ensembl"/>
</dbReference>
<dbReference type="GO" id="GO:0032509">
    <property type="term" value="P:endosome transport via multivesicular body sorting pathway"/>
    <property type="evidence" value="ECO:0000250"/>
    <property type="project" value="UniProtKB"/>
</dbReference>
<dbReference type="GO" id="GO:0015031">
    <property type="term" value="P:protein transport"/>
    <property type="evidence" value="ECO:0000250"/>
    <property type="project" value="UniProtKB"/>
</dbReference>
<dbReference type="GO" id="GO:2000641">
    <property type="term" value="P:regulation of early endosome to late endosome transport"/>
    <property type="evidence" value="ECO:0000250"/>
    <property type="project" value="UniProtKB"/>
</dbReference>
<dbReference type="InterPro" id="IPR042431">
    <property type="entry name" value="FAM45"/>
</dbReference>
<dbReference type="InterPro" id="IPR037516">
    <property type="entry name" value="Tripartite_DENN"/>
</dbReference>
<dbReference type="PANTHER" id="PTHR28544:SF1">
    <property type="entry name" value="DENN DOMAIN-CONTAINING PROTEIN 10-RELATED"/>
    <property type="match status" value="1"/>
</dbReference>
<dbReference type="PANTHER" id="PTHR28544">
    <property type="entry name" value="PROTEIN FAM45A-RELATED"/>
    <property type="match status" value="1"/>
</dbReference>
<dbReference type="Pfam" id="PF08616">
    <property type="entry name" value="SPA"/>
    <property type="match status" value="1"/>
</dbReference>
<dbReference type="PROSITE" id="PS50211">
    <property type="entry name" value="DENN"/>
    <property type="match status" value="1"/>
</dbReference>
<evidence type="ECO:0000250" key="1">
    <source>
        <dbReference type="UniProtKB" id="Q8TCE6"/>
    </source>
</evidence>
<evidence type="ECO:0000255" key="2">
    <source>
        <dbReference type="PROSITE-ProRule" id="PRU00304"/>
    </source>
</evidence>
<evidence type="ECO:0000305" key="3"/>
<evidence type="ECO:0000312" key="4">
    <source>
        <dbReference type="MGI" id="MGI:1915144"/>
    </source>
</evidence>
<protein>
    <recommendedName>
        <fullName evidence="3">DENN domain-containing protein 10</fullName>
    </recommendedName>
    <alternativeName>
        <fullName>Protein FAM45A</fullName>
    </alternativeName>
</protein>
<accession>Q9D8N2</accession>
<accession>Q3UL11</accession>
<accession>Q91WS5</accession>
<proteinExistence type="evidence at protein level"/>
<keyword id="KW-0967">Endosome</keyword>
<keyword id="KW-0344">Guanine-nucleotide releasing factor</keyword>
<keyword id="KW-1185">Reference proteome</keyword>
<feature type="chain" id="PRO_0000187036" description="DENN domain-containing protein 10">
    <location>
        <begin position="1"/>
        <end position="357"/>
    </location>
</feature>
<feature type="domain" description="uDENN" evidence="2">
    <location>
        <begin position="1"/>
        <end position="136"/>
    </location>
</feature>
<feature type="domain" description="cDENN" evidence="2">
    <location>
        <begin position="152"/>
        <end position="299"/>
    </location>
</feature>
<feature type="domain" description="dDENN" evidence="2">
    <location>
        <begin position="301"/>
        <end position="357"/>
    </location>
</feature>
<feature type="sequence conflict" description="In Ref. 2; AAH13514." evidence="3" ref="2">
    <original>S</original>
    <variation>SS</variation>
    <location>
        <position position="22"/>
    </location>
</feature>
<feature type="sequence conflict" description="In Ref. 1; BAB25318." evidence="3" ref="1">
    <original>S</original>
    <variation>F</variation>
    <location>
        <position position="286"/>
    </location>
</feature>
<feature type="sequence conflict" description="In Ref. 1; BAB25318." evidence="3" ref="1">
    <original>I</original>
    <variation>F</variation>
    <location>
        <position position="308"/>
    </location>
</feature>